<organism>
    <name type="scientific">Bifidobacterium longum (strain NCC 2705)</name>
    <dbReference type="NCBI Taxonomy" id="206672"/>
    <lineage>
        <taxon>Bacteria</taxon>
        <taxon>Bacillati</taxon>
        <taxon>Actinomycetota</taxon>
        <taxon>Actinomycetes</taxon>
        <taxon>Bifidobacteriales</taxon>
        <taxon>Bifidobacteriaceae</taxon>
        <taxon>Bifidobacterium</taxon>
    </lineage>
</organism>
<keyword id="KW-0067">ATP-binding</keyword>
<keyword id="KW-0963">Cytoplasm</keyword>
<keyword id="KW-0324">Glycolysis</keyword>
<keyword id="KW-0418">Kinase</keyword>
<keyword id="KW-0547">Nucleotide-binding</keyword>
<keyword id="KW-1185">Reference proteome</keyword>
<keyword id="KW-0808">Transferase</keyword>
<reference key="1">
    <citation type="journal article" date="2002" name="Proc. Natl. Acad. Sci. U.S.A.">
        <title>The genome sequence of Bifidobacterium longum reflects its adaptation to the human gastrointestinal tract.</title>
        <authorList>
            <person name="Schell M.A."/>
            <person name="Karmirantzou M."/>
            <person name="Snel B."/>
            <person name="Vilanova D."/>
            <person name="Berger B."/>
            <person name="Pessi G."/>
            <person name="Zwahlen M.-C."/>
            <person name="Desiere F."/>
            <person name="Bork P."/>
            <person name="Delley M."/>
            <person name="Pridmore R.D."/>
            <person name="Arigoni F."/>
        </authorList>
    </citation>
    <scope>NUCLEOTIDE SEQUENCE [LARGE SCALE GENOMIC DNA]</scope>
    <source>
        <strain>NCC 2705</strain>
    </source>
</reference>
<sequence>MKTLKDLGDLKGKRVLVRADFNVPLDGTTITDDGRIKAALPTIKTLREEGAKVILMAHLGRPKGKVVPELSLAPVAARLGELLGANVPLAKDTYGEDAQAKVAAMNDGDVVLLENVRFNPEETSKDADERAAYAKKIAALGEAFVSDGFGVVHRAQGSNYDVAADLPAAAGLLVEKEVKALSKATENPERPFTVVLGGSKVSDKLGVIENLLDKANRLVIGGGMVFTFLKAKGYEVGTSLLEEDQLEKVKGYIETAEKNGVELVLPTDVVVNAGFPAGDTPVAPEVVAADAIPADKMGLDIGPESQKLFHDKIVDSKTVVWNGPMGVFEVPEFAAGTKAVAQGLVDATAVGAFTIVGGGDSASAVRNLGFPEDGFSHISTGGGASLEFLEGKELPGLKVLE</sequence>
<name>PGK_BIFLO</name>
<proteinExistence type="inferred from homology"/>
<protein>
    <recommendedName>
        <fullName evidence="1">Phosphoglycerate kinase</fullName>
        <ecNumber evidence="1">2.7.2.3</ecNumber>
    </recommendedName>
</protein>
<accession>Q8G6D6</accession>
<dbReference type="EC" id="2.7.2.3" evidence="1"/>
<dbReference type="EMBL" id="AE014295">
    <property type="protein sequence ID" value="AAN24526.1"/>
    <property type="status" value="ALT_INIT"/>
    <property type="molecule type" value="Genomic_DNA"/>
</dbReference>
<dbReference type="RefSeq" id="NP_695890.1">
    <property type="nucleotide sequence ID" value="NC_004307.2"/>
</dbReference>
<dbReference type="RefSeq" id="WP_032737730.1">
    <property type="nucleotide sequence ID" value="NC_004307.2"/>
</dbReference>
<dbReference type="SMR" id="Q8G6D6"/>
<dbReference type="STRING" id="206672.BL0707"/>
<dbReference type="MoonProt" id="Q8G6D6"/>
<dbReference type="EnsemblBacteria" id="AAN24526">
    <property type="protein sequence ID" value="AAN24526"/>
    <property type="gene ID" value="BL0707"/>
</dbReference>
<dbReference type="KEGG" id="blo:BL0707"/>
<dbReference type="PATRIC" id="fig|206672.9.peg.406"/>
<dbReference type="HOGENOM" id="CLU_025427_0_2_11"/>
<dbReference type="OrthoDB" id="9808460at2"/>
<dbReference type="UniPathway" id="UPA00109">
    <property type="reaction ID" value="UER00185"/>
</dbReference>
<dbReference type="Proteomes" id="UP000000439">
    <property type="component" value="Chromosome"/>
</dbReference>
<dbReference type="GO" id="GO:0005829">
    <property type="term" value="C:cytosol"/>
    <property type="evidence" value="ECO:0007669"/>
    <property type="project" value="TreeGrafter"/>
</dbReference>
<dbReference type="GO" id="GO:0043531">
    <property type="term" value="F:ADP binding"/>
    <property type="evidence" value="ECO:0007669"/>
    <property type="project" value="TreeGrafter"/>
</dbReference>
<dbReference type="GO" id="GO:0005524">
    <property type="term" value="F:ATP binding"/>
    <property type="evidence" value="ECO:0007669"/>
    <property type="project" value="UniProtKB-KW"/>
</dbReference>
<dbReference type="GO" id="GO:0004618">
    <property type="term" value="F:phosphoglycerate kinase activity"/>
    <property type="evidence" value="ECO:0007669"/>
    <property type="project" value="UniProtKB-UniRule"/>
</dbReference>
<dbReference type="GO" id="GO:0006094">
    <property type="term" value="P:gluconeogenesis"/>
    <property type="evidence" value="ECO:0007669"/>
    <property type="project" value="TreeGrafter"/>
</dbReference>
<dbReference type="GO" id="GO:0006096">
    <property type="term" value="P:glycolytic process"/>
    <property type="evidence" value="ECO:0007669"/>
    <property type="project" value="UniProtKB-UniRule"/>
</dbReference>
<dbReference type="CDD" id="cd00318">
    <property type="entry name" value="Phosphoglycerate_kinase"/>
    <property type="match status" value="1"/>
</dbReference>
<dbReference type="FunFam" id="3.40.50.1260:FF:000003">
    <property type="entry name" value="Phosphoglycerate kinase"/>
    <property type="match status" value="1"/>
</dbReference>
<dbReference type="FunFam" id="3.40.50.1260:FF:000006">
    <property type="entry name" value="Phosphoglycerate kinase"/>
    <property type="match status" value="1"/>
</dbReference>
<dbReference type="Gene3D" id="3.40.50.1260">
    <property type="entry name" value="Phosphoglycerate kinase, N-terminal domain"/>
    <property type="match status" value="2"/>
</dbReference>
<dbReference type="HAMAP" id="MF_00145">
    <property type="entry name" value="Phosphoglyc_kinase"/>
    <property type="match status" value="1"/>
</dbReference>
<dbReference type="InterPro" id="IPR001576">
    <property type="entry name" value="Phosphoglycerate_kinase"/>
</dbReference>
<dbReference type="InterPro" id="IPR015911">
    <property type="entry name" value="Phosphoglycerate_kinase_CS"/>
</dbReference>
<dbReference type="InterPro" id="IPR015824">
    <property type="entry name" value="Phosphoglycerate_kinase_N"/>
</dbReference>
<dbReference type="InterPro" id="IPR036043">
    <property type="entry name" value="Phosphoglycerate_kinase_sf"/>
</dbReference>
<dbReference type="PANTHER" id="PTHR11406">
    <property type="entry name" value="PHOSPHOGLYCERATE KINASE"/>
    <property type="match status" value="1"/>
</dbReference>
<dbReference type="PANTHER" id="PTHR11406:SF23">
    <property type="entry name" value="PHOSPHOGLYCERATE KINASE 1, CHLOROPLASTIC-RELATED"/>
    <property type="match status" value="1"/>
</dbReference>
<dbReference type="Pfam" id="PF00162">
    <property type="entry name" value="PGK"/>
    <property type="match status" value="1"/>
</dbReference>
<dbReference type="PIRSF" id="PIRSF000724">
    <property type="entry name" value="Pgk"/>
    <property type="match status" value="1"/>
</dbReference>
<dbReference type="PRINTS" id="PR00477">
    <property type="entry name" value="PHGLYCKINASE"/>
</dbReference>
<dbReference type="SUPFAM" id="SSF53748">
    <property type="entry name" value="Phosphoglycerate kinase"/>
    <property type="match status" value="1"/>
</dbReference>
<dbReference type="PROSITE" id="PS00111">
    <property type="entry name" value="PGLYCERATE_KINASE"/>
    <property type="match status" value="1"/>
</dbReference>
<feature type="chain" id="PRO_0000145909" description="Phosphoglycerate kinase">
    <location>
        <begin position="1"/>
        <end position="401"/>
    </location>
</feature>
<feature type="binding site" evidence="1">
    <location>
        <begin position="20"/>
        <end position="22"/>
    </location>
    <ligand>
        <name>substrate</name>
    </ligand>
</feature>
<feature type="binding site" evidence="1">
    <location>
        <position position="35"/>
    </location>
    <ligand>
        <name>substrate</name>
    </ligand>
</feature>
<feature type="binding site" evidence="1">
    <location>
        <begin position="58"/>
        <end position="61"/>
    </location>
    <ligand>
        <name>substrate</name>
    </ligand>
</feature>
<feature type="binding site" evidence="1">
    <location>
        <position position="117"/>
    </location>
    <ligand>
        <name>substrate</name>
    </ligand>
</feature>
<feature type="binding site" evidence="1">
    <location>
        <position position="154"/>
    </location>
    <ligand>
        <name>substrate</name>
    </ligand>
</feature>
<feature type="binding site" evidence="1">
    <location>
        <position position="204"/>
    </location>
    <ligand>
        <name>ATP</name>
        <dbReference type="ChEBI" id="CHEBI:30616"/>
    </ligand>
</feature>
<feature type="binding site" evidence="1">
    <location>
        <position position="298"/>
    </location>
    <ligand>
        <name>ATP</name>
        <dbReference type="ChEBI" id="CHEBI:30616"/>
    </ligand>
</feature>
<feature type="binding site" evidence="1">
    <location>
        <position position="329"/>
    </location>
    <ligand>
        <name>ATP</name>
        <dbReference type="ChEBI" id="CHEBI:30616"/>
    </ligand>
</feature>
<feature type="binding site" evidence="1">
    <location>
        <begin position="358"/>
        <end position="361"/>
    </location>
    <ligand>
        <name>ATP</name>
        <dbReference type="ChEBI" id="CHEBI:30616"/>
    </ligand>
</feature>
<gene>
    <name evidence="1" type="primary">pgk</name>
    <name type="ordered locus">BL0707</name>
</gene>
<comment type="catalytic activity">
    <reaction evidence="1">
        <text>(2R)-3-phosphoglycerate + ATP = (2R)-3-phospho-glyceroyl phosphate + ADP</text>
        <dbReference type="Rhea" id="RHEA:14801"/>
        <dbReference type="ChEBI" id="CHEBI:30616"/>
        <dbReference type="ChEBI" id="CHEBI:57604"/>
        <dbReference type="ChEBI" id="CHEBI:58272"/>
        <dbReference type="ChEBI" id="CHEBI:456216"/>
        <dbReference type="EC" id="2.7.2.3"/>
    </reaction>
</comment>
<comment type="pathway">
    <text evidence="1">Carbohydrate degradation; glycolysis; pyruvate from D-glyceraldehyde 3-phosphate: step 2/5.</text>
</comment>
<comment type="subunit">
    <text evidence="1">Monomer.</text>
</comment>
<comment type="subcellular location">
    <subcellularLocation>
        <location evidence="1">Cytoplasm</location>
    </subcellularLocation>
</comment>
<comment type="similarity">
    <text evidence="1">Belongs to the phosphoglycerate kinase family.</text>
</comment>
<comment type="sequence caution" evidence="2">
    <conflict type="erroneous initiation">
        <sequence resource="EMBL-CDS" id="AAN24526"/>
    </conflict>
</comment>
<evidence type="ECO:0000255" key="1">
    <source>
        <dbReference type="HAMAP-Rule" id="MF_00145"/>
    </source>
</evidence>
<evidence type="ECO:0000305" key="2"/>